<dbReference type="EMBL" id="BC105399">
    <property type="protein sequence ID" value="AAI05400.1"/>
    <property type="molecule type" value="mRNA"/>
</dbReference>
<dbReference type="RefSeq" id="NP_001039380.1">
    <property type="nucleotide sequence ID" value="NM_001045915.2"/>
</dbReference>
<dbReference type="SMR" id="Q2KJD2"/>
<dbReference type="FunCoup" id="Q2KJD2">
    <property type="interactions" value="1443"/>
</dbReference>
<dbReference type="SwissPalm" id="Q2KJD2"/>
<dbReference type="PaxDb" id="9913-ENSBTAP00000019438"/>
<dbReference type="GeneID" id="505379"/>
<dbReference type="KEGG" id="bta:505379"/>
<dbReference type="CTD" id="9341"/>
<dbReference type="eggNOG" id="KOG0860">
    <property type="taxonomic scope" value="Eukaryota"/>
</dbReference>
<dbReference type="HOGENOM" id="CLU_064620_4_1_1"/>
<dbReference type="InParanoid" id="Q2KJD2"/>
<dbReference type="OrthoDB" id="10042941at2759"/>
<dbReference type="Proteomes" id="UP000009136">
    <property type="component" value="Unplaced"/>
</dbReference>
<dbReference type="GO" id="GO:0005829">
    <property type="term" value="C:cytosol"/>
    <property type="evidence" value="ECO:0007669"/>
    <property type="project" value="GOC"/>
</dbReference>
<dbReference type="GO" id="GO:0031901">
    <property type="term" value="C:early endosome membrane"/>
    <property type="evidence" value="ECO:0007669"/>
    <property type="project" value="UniProtKB-SubCell"/>
</dbReference>
<dbReference type="GO" id="GO:0043005">
    <property type="term" value="C:neuron projection"/>
    <property type="evidence" value="ECO:0007669"/>
    <property type="project" value="UniProtKB-KW"/>
</dbReference>
<dbReference type="GO" id="GO:0005886">
    <property type="term" value="C:plasma membrane"/>
    <property type="evidence" value="ECO:0000250"/>
    <property type="project" value="UniProtKB"/>
</dbReference>
<dbReference type="GO" id="GO:0055038">
    <property type="term" value="C:recycling endosome membrane"/>
    <property type="evidence" value="ECO:0007669"/>
    <property type="project" value="UniProtKB-SubCell"/>
</dbReference>
<dbReference type="GO" id="GO:0031201">
    <property type="term" value="C:SNARE complex"/>
    <property type="evidence" value="ECO:0000318"/>
    <property type="project" value="GO_Central"/>
</dbReference>
<dbReference type="GO" id="GO:0045202">
    <property type="term" value="C:synapse"/>
    <property type="evidence" value="ECO:0007669"/>
    <property type="project" value="UniProtKB-SubCell"/>
</dbReference>
<dbReference type="GO" id="GO:0005484">
    <property type="term" value="F:SNAP receptor activity"/>
    <property type="evidence" value="ECO:0000318"/>
    <property type="project" value="GO_Central"/>
</dbReference>
<dbReference type="GO" id="GO:0017075">
    <property type="term" value="F:syntaxin-1 binding"/>
    <property type="evidence" value="ECO:0000318"/>
    <property type="project" value="GO_Central"/>
</dbReference>
<dbReference type="GO" id="GO:0001921">
    <property type="term" value="P:positive regulation of receptor recycling"/>
    <property type="evidence" value="ECO:0000250"/>
    <property type="project" value="UniProtKB"/>
</dbReference>
<dbReference type="GO" id="GO:0015031">
    <property type="term" value="P:protein transport"/>
    <property type="evidence" value="ECO:0007669"/>
    <property type="project" value="UniProtKB-KW"/>
</dbReference>
<dbReference type="GO" id="GO:0042147">
    <property type="term" value="P:retrograde transport, endosome to Golgi"/>
    <property type="evidence" value="ECO:0000250"/>
    <property type="project" value="UniProtKB"/>
</dbReference>
<dbReference type="GO" id="GO:0035493">
    <property type="term" value="P:SNARE complex assembly"/>
    <property type="evidence" value="ECO:0000318"/>
    <property type="project" value="GO_Central"/>
</dbReference>
<dbReference type="GO" id="GO:0034446">
    <property type="term" value="P:substrate adhesion-dependent cell spreading"/>
    <property type="evidence" value="ECO:0000250"/>
    <property type="project" value="UniProtKB"/>
</dbReference>
<dbReference type="GO" id="GO:0006906">
    <property type="term" value="P:vesicle fusion"/>
    <property type="evidence" value="ECO:0000318"/>
    <property type="project" value="GO_Central"/>
</dbReference>
<dbReference type="GO" id="GO:0016192">
    <property type="term" value="P:vesicle-mediated transport"/>
    <property type="evidence" value="ECO:0000250"/>
    <property type="project" value="UniProtKB"/>
</dbReference>
<dbReference type="CDD" id="cd15870">
    <property type="entry name" value="R-SNARE_VAMP2"/>
    <property type="match status" value="1"/>
</dbReference>
<dbReference type="FunFam" id="1.20.5.110:FF:000013">
    <property type="entry name" value="Vesicle-associated membrane protein 2"/>
    <property type="match status" value="1"/>
</dbReference>
<dbReference type="Gene3D" id="1.20.5.110">
    <property type="match status" value="1"/>
</dbReference>
<dbReference type="InterPro" id="IPR001388">
    <property type="entry name" value="Synaptobrevin-like"/>
</dbReference>
<dbReference type="InterPro" id="IPR016444">
    <property type="entry name" value="Synaptobrevin/VAMP"/>
</dbReference>
<dbReference type="InterPro" id="IPR042855">
    <property type="entry name" value="V_SNARE_CC"/>
</dbReference>
<dbReference type="PANTHER" id="PTHR45701">
    <property type="entry name" value="SYNAPTOBREVIN FAMILY MEMBER"/>
    <property type="match status" value="1"/>
</dbReference>
<dbReference type="Pfam" id="PF00957">
    <property type="entry name" value="Synaptobrevin"/>
    <property type="match status" value="1"/>
</dbReference>
<dbReference type="PIRSF" id="PIRSF005409">
    <property type="entry name" value="Synaptobrevin_euk"/>
    <property type="match status" value="1"/>
</dbReference>
<dbReference type="PRINTS" id="PR00219">
    <property type="entry name" value="SYNAPTOBREVN"/>
</dbReference>
<dbReference type="SUPFAM" id="SSF58038">
    <property type="entry name" value="SNARE fusion complex"/>
    <property type="match status" value="1"/>
</dbReference>
<dbReference type="PROSITE" id="PS00417">
    <property type="entry name" value="SYNAPTOBREVIN"/>
    <property type="match status" value="1"/>
</dbReference>
<dbReference type="PROSITE" id="PS50892">
    <property type="entry name" value="V_SNARE"/>
    <property type="match status" value="1"/>
</dbReference>
<accession>Q2KJD2</accession>
<organism>
    <name type="scientific">Bos taurus</name>
    <name type="common">Bovine</name>
    <dbReference type="NCBI Taxonomy" id="9913"/>
    <lineage>
        <taxon>Eukaryota</taxon>
        <taxon>Metazoa</taxon>
        <taxon>Chordata</taxon>
        <taxon>Craniata</taxon>
        <taxon>Vertebrata</taxon>
        <taxon>Euteleostomi</taxon>
        <taxon>Mammalia</taxon>
        <taxon>Eutheria</taxon>
        <taxon>Laurasiatheria</taxon>
        <taxon>Artiodactyla</taxon>
        <taxon>Ruminantia</taxon>
        <taxon>Pecora</taxon>
        <taxon>Bovidae</taxon>
        <taxon>Bovinae</taxon>
        <taxon>Bos</taxon>
    </lineage>
</organism>
<protein>
    <recommendedName>
        <fullName>Vesicle-associated membrane protein 3</fullName>
        <shortName>VAMP-3</shortName>
    </recommendedName>
    <alternativeName>
        <fullName>Synaptobrevin-3</fullName>
    </alternativeName>
</protein>
<keyword id="KW-0175">Coiled coil</keyword>
<keyword id="KW-0967">Endosome</keyword>
<keyword id="KW-1017">Isopeptide bond</keyword>
<keyword id="KW-0472">Membrane</keyword>
<keyword id="KW-0653">Protein transport</keyword>
<keyword id="KW-1185">Reference proteome</keyword>
<keyword id="KW-0770">Synapse</keyword>
<keyword id="KW-0771">Synaptosome</keyword>
<keyword id="KW-0812">Transmembrane</keyword>
<keyword id="KW-1133">Transmembrane helix</keyword>
<keyword id="KW-0813">Transport</keyword>
<keyword id="KW-0832">Ubl conjugation</keyword>
<proteinExistence type="inferred from homology"/>
<name>VAMP3_BOVIN</name>
<comment type="function">
    <text evidence="2">SNARE involved in vesicular transport from the late endosomes to the trans-Golgi network.</text>
</comment>
<comment type="subunit">
    <text evidence="1 2">Interacts with POPDC1 (via the C-terminus cytoplasmic tail). Interacts with BCAP31; involved in VAMP3 export from the endoplasmic reticulum (By similarity). Interacts with BAIAP3; this interaction is increased in the presence of calcium (By similarity). Interacts with PICALM (By similarity).</text>
</comment>
<comment type="subcellular location">
    <subcellularLocation>
        <location evidence="2">Early endosome membrane</location>
        <topology evidence="3">Single-pass type IV membrane protein</topology>
    </subcellularLocation>
    <subcellularLocation>
        <location evidence="2">Recycling endosome membrane</location>
        <topology evidence="3">Single-pass type IV membrane protein</topology>
    </subcellularLocation>
    <subcellularLocation>
        <location evidence="2">Synapse</location>
        <location evidence="2">Synaptosome</location>
    </subcellularLocation>
</comment>
<comment type="PTM">
    <text evidence="2">Ubiquitinated by RNF167 at Lys-70, Lys-72 and Lys-81, regulating the recycling endosome pathway.</text>
</comment>
<comment type="similarity">
    <text evidence="6">Belongs to the synaptobrevin family.</text>
</comment>
<reference key="1">
    <citation type="submission" date="2005-09" db="EMBL/GenBank/DDBJ databases">
        <authorList>
            <consortium name="NIH - Mammalian Gene Collection (MGC) project"/>
        </authorList>
    </citation>
    <scope>NUCLEOTIDE SEQUENCE [LARGE SCALE MRNA]</scope>
    <source>
        <strain>Hereford</strain>
        <tissue>Heart ventricle</tissue>
    </source>
</reference>
<sequence>MTTNAPAGSSAAAGSSRRLQQTQNQVDEVVDIMRVNVDKVLERDQKLSELDDRADALQAGASQFETSAAKLKRKYWWKNCKMWAIGITVVVIIIIIIVVWSISS</sequence>
<gene>
    <name type="primary">VAMP3</name>
    <name type="synonym">SYB3</name>
</gene>
<evidence type="ECO:0000250" key="1">
    <source>
        <dbReference type="UniProtKB" id="P63024"/>
    </source>
</evidence>
<evidence type="ECO:0000250" key="2">
    <source>
        <dbReference type="UniProtKB" id="Q15836"/>
    </source>
</evidence>
<evidence type="ECO:0000255" key="3"/>
<evidence type="ECO:0000255" key="4">
    <source>
        <dbReference type="PROSITE-ProRule" id="PRU00290"/>
    </source>
</evidence>
<evidence type="ECO:0000256" key="5">
    <source>
        <dbReference type="SAM" id="MobiDB-lite"/>
    </source>
</evidence>
<evidence type="ECO:0000305" key="6"/>
<feature type="chain" id="PRO_0000273715" description="Vesicle-associated membrane protein 3">
    <location>
        <begin position="1"/>
        <end position="104"/>
    </location>
</feature>
<feature type="topological domain" description="Cytoplasmic" evidence="3">
    <location>
        <begin position="1"/>
        <end position="81"/>
    </location>
</feature>
<feature type="transmembrane region" description="Helical; Anchor for type IV membrane protein" evidence="3">
    <location>
        <begin position="82"/>
        <end position="102"/>
    </location>
</feature>
<feature type="topological domain" description="Vesicular" evidence="3">
    <location>
        <begin position="103"/>
        <end position="104"/>
    </location>
</feature>
<feature type="domain" description="v-SNARE coiled-coil homology" evidence="4">
    <location>
        <begin position="18"/>
        <end position="78"/>
    </location>
</feature>
<feature type="region of interest" description="Disordered" evidence="5">
    <location>
        <begin position="1"/>
        <end position="23"/>
    </location>
</feature>
<feature type="compositionally biased region" description="Low complexity" evidence="5">
    <location>
        <begin position="7"/>
        <end position="16"/>
    </location>
</feature>
<feature type="cross-link" description="Glycyl lysine isopeptide (Lys-Gly) (interchain with G-Cter in ubiquitin)" evidence="2">
    <location>
        <position position="70"/>
    </location>
</feature>
<feature type="cross-link" description="Glycyl lysine isopeptide (Lys-Gly) (interchain with G-Cter in ubiquitin)" evidence="2">
    <location>
        <position position="72"/>
    </location>
</feature>
<feature type="cross-link" description="Glycyl lysine isopeptide (Lys-Gly) (interchain with G-Cter in ubiquitin)" evidence="2">
    <location>
        <position position="81"/>
    </location>
</feature>